<keyword id="KW-0963">Cytoplasm</keyword>
<keyword id="KW-0968">Cytoplasmic vesicle</keyword>
<keyword id="KW-0206">Cytoskeleton</keyword>
<keyword id="KW-0278">Fertilization</keyword>
<keyword id="KW-1185">Reference proteome</keyword>
<comment type="function">
    <text evidence="3">Testis-specic protein that plays an important role in fusion of proacrosomal vesicles and perinuclear theca formation.</text>
</comment>
<comment type="subunit">
    <text evidence="1">Interacts with ACTL7A.</text>
</comment>
<comment type="subcellular location">
    <subcellularLocation>
        <location evidence="1">Cytoplasmic vesicle</location>
        <location evidence="1">Secretory vesicle</location>
        <location evidence="1">Acrosome</location>
    </subcellularLocation>
    <subcellularLocation>
        <location evidence="1">Cytoplasm</location>
        <location evidence="1">Cytoskeleton</location>
        <location evidence="1">Perinuclear theca</location>
    </subcellularLocation>
    <text evidence="1">Localizes predominantly in the equatorial segment of the sperm head and neck regions, with some localization in the acrosomal segment of the head. Colocalizes in the acrosomal and equatorial segments of sperm with ACTL7A. Colocalizes with PLCZ1 in the equatorial segment of the head of capacitated sperm.</text>
</comment>
<comment type="similarity">
    <text evidence="4">Belongs to the actin family.</text>
</comment>
<reference key="1">
    <citation type="submission" date="2002-02" db="EMBL/GenBank/DDBJ databases">
        <title>Genomic sequence analysis in the mouse T-complex region.</title>
        <authorList>
            <person name="Brathwaite M.E."/>
            <person name="Waeltz P."/>
            <person name="Qian Y."/>
            <person name="Dudekula D."/>
            <person name="Schlessinger D."/>
            <person name="Nagaraja R."/>
        </authorList>
    </citation>
    <scope>NUCLEOTIDE SEQUENCE [LARGE SCALE GENOMIC DNA]</scope>
    <source>
        <strain>129/Sv</strain>
    </source>
</reference>
<reference key="2">
    <citation type="journal article" date="2004" name="Genome Res.">
        <title>The status, quality, and expansion of the NIH full-length cDNA project: the Mammalian Gene Collection (MGC).</title>
        <authorList>
            <consortium name="The MGC Project Team"/>
        </authorList>
    </citation>
    <scope>NUCLEOTIDE SEQUENCE [LARGE SCALE MRNA] OF 144-415</scope>
    <source>
        <tissue>Testis</tissue>
    </source>
</reference>
<reference key="3">
    <citation type="journal article" date="2010" name="Cell">
        <title>A tissue-specific atlas of mouse protein phosphorylation and expression.</title>
        <authorList>
            <person name="Huttlin E.L."/>
            <person name="Jedrychowski M.P."/>
            <person name="Elias J.E."/>
            <person name="Goswami T."/>
            <person name="Rad R."/>
            <person name="Beausoleil S.A."/>
            <person name="Villen J."/>
            <person name="Haas W."/>
            <person name="Sowa M.E."/>
            <person name="Gygi S.P."/>
        </authorList>
    </citation>
    <scope>IDENTIFICATION BY MASS SPECTROMETRY [LARGE SCALE ANALYSIS]</scope>
    <source>
        <tissue>Testis</tissue>
    </source>
</reference>
<reference key="4">
    <citation type="journal article" date="2021" name="Am. J. Hum. Genet.">
        <title>Homozygous pathogenic variants in ACTL9 cause fertilization failure and male infertility in humans and mice.</title>
        <authorList>
            <person name="Dai J."/>
            <person name="Zhang T."/>
            <person name="Guo J."/>
            <person name="Zhou Q."/>
            <person name="Gu Y."/>
            <person name="Zhang J."/>
            <person name="Hu L."/>
            <person name="Zong Y."/>
            <person name="Song J."/>
            <person name="Zhang S."/>
            <person name="Dai C."/>
            <person name="Gong F."/>
            <person name="Lu G."/>
            <person name="Zheng W."/>
            <person name="Lin G."/>
        </authorList>
    </citation>
    <scope>FUNCTION</scope>
    <scope>MUTAGENESIS OF VAL-379</scope>
</reference>
<sequence>MDVNGHPKFQPSPETDGPLPLTSSTLMVSKSLQQDSLSMVGDRLPPKTGAVVIDMGTGTCKVGFAGQSQPTYTVATILGCQPKKQATKDQSELETFIGEAARSRPELRLVKPIRNGIVVDWEAAELIWRHILEHDLQVATHEHPLLFSDPPFSPATNREKLVEVAFESLHSPALYVASQSVLSVYAHGRVNGLVVDTGHGVSYTVPVVQGYNLPHAIQRLDLAGNHLTAFLAEMLLGSGFSLQQEDLDLVENIKHHYCYLAPDFQKEQARPDEECKQSLKLPDGRTVTLGKELFQCPELLFHPPEIPGLSPIGLPAMAEQSLLKVPQELRPHVARNVILCGGSSLFTGLEGRFRAELLHSLSPEDHVVVMAHPNRNLSVWIGGSILASLHAFQSCWVLREQYEERGPQVVYRKCY</sequence>
<proteinExistence type="evidence at protein level"/>
<gene>
    <name type="primary">Actl9</name>
    <name type="synonym">Actl7c</name>
</gene>
<protein>
    <recommendedName>
        <fullName>Actin-like protein 9</fullName>
    </recommendedName>
</protein>
<name>ACTL9_MOUSE</name>
<accession>Q8CG27</accession>
<accession>Q497R1</accession>
<accession>Q5EBK5</accession>
<dbReference type="EMBL" id="AF528163">
    <property type="protein sequence ID" value="AAO17383.1"/>
    <property type="molecule type" value="Genomic_DNA"/>
</dbReference>
<dbReference type="EMBL" id="BC089487">
    <property type="protein sequence ID" value="AAH89487.1"/>
    <property type="molecule type" value="mRNA"/>
</dbReference>
<dbReference type="EMBL" id="BC100422">
    <property type="protein sequence ID" value="AAI00423.1"/>
    <property type="molecule type" value="mRNA"/>
</dbReference>
<dbReference type="CCDS" id="CCDS57063.1"/>
<dbReference type="RefSeq" id="NP_899105.2">
    <property type="nucleotide sequence ID" value="NM_183282.2"/>
</dbReference>
<dbReference type="SMR" id="Q8CG27"/>
<dbReference type="FunCoup" id="Q8CG27">
    <property type="interactions" value="14"/>
</dbReference>
<dbReference type="STRING" id="10090.ENSMUSP00000134564"/>
<dbReference type="iPTMnet" id="Q8CG27"/>
<dbReference type="PhosphoSitePlus" id="Q8CG27"/>
<dbReference type="PaxDb" id="10090-ENSMUSP00000134564"/>
<dbReference type="ProteomicsDB" id="285752"/>
<dbReference type="Antibodypedia" id="12540">
    <property type="antibodies" value="112 antibodies from 20 providers"/>
</dbReference>
<dbReference type="DNASU" id="69481"/>
<dbReference type="Ensembl" id="ENSMUST00000174088.3">
    <property type="protein sequence ID" value="ENSMUSP00000134564.2"/>
    <property type="gene ID" value="ENSMUSG00000092519.3"/>
</dbReference>
<dbReference type="GeneID" id="69481"/>
<dbReference type="KEGG" id="mmu:69481"/>
<dbReference type="UCSC" id="uc008byl.1">
    <property type="organism name" value="mouse"/>
</dbReference>
<dbReference type="AGR" id="MGI:1916731"/>
<dbReference type="CTD" id="284382"/>
<dbReference type="MGI" id="MGI:1916731">
    <property type="gene designation" value="Actl9"/>
</dbReference>
<dbReference type="VEuPathDB" id="HostDB:ENSMUSG00000092519"/>
<dbReference type="eggNOG" id="KOG0676">
    <property type="taxonomic scope" value="Eukaryota"/>
</dbReference>
<dbReference type="GeneTree" id="ENSGT00940000163012"/>
<dbReference type="HOGENOM" id="CLU_027965_0_2_1"/>
<dbReference type="InParanoid" id="Q8CG27"/>
<dbReference type="OMA" id="HATERMD"/>
<dbReference type="OrthoDB" id="9932367at2759"/>
<dbReference type="PhylomeDB" id="Q8CG27"/>
<dbReference type="TreeFam" id="TF354237"/>
<dbReference type="BioGRID-ORCS" id="69481">
    <property type="hits" value="1 hit in 78 CRISPR screens"/>
</dbReference>
<dbReference type="ChiTaRS" id="Actl9">
    <property type="organism name" value="mouse"/>
</dbReference>
<dbReference type="PRO" id="PR:Q8CG27"/>
<dbReference type="Proteomes" id="UP000000589">
    <property type="component" value="Chromosome 17"/>
</dbReference>
<dbReference type="RNAct" id="Q8CG27">
    <property type="molecule type" value="protein"/>
</dbReference>
<dbReference type="Bgee" id="ENSMUSG00000092519">
    <property type="expression patterns" value="Expressed in seminiferous tubule of testis and 18 other cell types or tissues"/>
</dbReference>
<dbReference type="GO" id="GO:0001669">
    <property type="term" value="C:acrosomal vesicle"/>
    <property type="evidence" value="ECO:0000250"/>
    <property type="project" value="UniProtKB"/>
</dbReference>
<dbReference type="GO" id="GO:0033011">
    <property type="term" value="C:perinuclear theca"/>
    <property type="evidence" value="ECO:0000250"/>
    <property type="project" value="UniProtKB"/>
</dbReference>
<dbReference type="GO" id="GO:0061827">
    <property type="term" value="C:sperm head"/>
    <property type="evidence" value="ECO:0000250"/>
    <property type="project" value="UniProtKB"/>
</dbReference>
<dbReference type="GO" id="GO:0001675">
    <property type="term" value="P:acrosome assembly"/>
    <property type="evidence" value="ECO:0000315"/>
    <property type="project" value="UniProtKB"/>
</dbReference>
<dbReference type="GO" id="GO:0009566">
    <property type="term" value="P:fertilization"/>
    <property type="evidence" value="ECO:0000315"/>
    <property type="project" value="UniProtKB"/>
</dbReference>
<dbReference type="GO" id="GO:0007338">
    <property type="term" value="P:single fertilization"/>
    <property type="evidence" value="ECO:0007669"/>
    <property type="project" value="UniProtKB-KW"/>
</dbReference>
<dbReference type="FunFam" id="3.30.420.40:FF:000050">
    <property type="entry name" value="Actin, alpha skeletal muscle"/>
    <property type="match status" value="1"/>
</dbReference>
<dbReference type="Gene3D" id="3.30.420.40">
    <property type="match status" value="2"/>
</dbReference>
<dbReference type="Gene3D" id="3.90.640.10">
    <property type="entry name" value="Actin, Chain A, domain 4"/>
    <property type="match status" value="1"/>
</dbReference>
<dbReference type="InterPro" id="IPR004000">
    <property type="entry name" value="Actin"/>
</dbReference>
<dbReference type="InterPro" id="IPR043129">
    <property type="entry name" value="ATPase_NBD"/>
</dbReference>
<dbReference type="PANTHER" id="PTHR11937">
    <property type="entry name" value="ACTIN"/>
    <property type="match status" value="1"/>
</dbReference>
<dbReference type="Pfam" id="PF00022">
    <property type="entry name" value="Actin"/>
    <property type="match status" value="1"/>
</dbReference>
<dbReference type="PRINTS" id="PR00190">
    <property type="entry name" value="ACTIN"/>
</dbReference>
<dbReference type="SMART" id="SM00268">
    <property type="entry name" value="ACTIN"/>
    <property type="match status" value="1"/>
</dbReference>
<dbReference type="SUPFAM" id="SSF53067">
    <property type="entry name" value="Actin-like ATPase domain"/>
    <property type="match status" value="2"/>
</dbReference>
<evidence type="ECO:0000250" key="1">
    <source>
        <dbReference type="UniProtKB" id="Q8TC94"/>
    </source>
</evidence>
<evidence type="ECO:0000256" key="2">
    <source>
        <dbReference type="SAM" id="MobiDB-lite"/>
    </source>
</evidence>
<evidence type="ECO:0000269" key="3">
    <source>
    </source>
</evidence>
<evidence type="ECO:0000305" key="4"/>
<feature type="chain" id="PRO_0000332298" description="Actin-like protein 9">
    <location>
        <begin position="1"/>
        <end position="415"/>
    </location>
</feature>
<feature type="region of interest" description="Disordered" evidence="2">
    <location>
        <begin position="1"/>
        <end position="22"/>
    </location>
</feature>
<feature type="mutagenesis site" description="Homozygous knockin male mice are infertile. Testis size, sperm concentration, viability and motility are normal. However the acrosome is detached from the nuclear envelope in sperm. Proacrosomal vesicles in the Golgi phase are atypical and separated in testis and they failed to fuse in the cap phase." evidence="3">
    <original>V</original>
    <variation>L</variation>
    <location>
        <position position="379"/>
    </location>
</feature>
<feature type="sequence conflict" description="In Ref. 2; AAH89487." evidence="4" ref="2">
    <original>Y</original>
    <variation>C</variation>
    <location>
        <position position="175"/>
    </location>
</feature>
<organism>
    <name type="scientific">Mus musculus</name>
    <name type="common">Mouse</name>
    <dbReference type="NCBI Taxonomy" id="10090"/>
    <lineage>
        <taxon>Eukaryota</taxon>
        <taxon>Metazoa</taxon>
        <taxon>Chordata</taxon>
        <taxon>Craniata</taxon>
        <taxon>Vertebrata</taxon>
        <taxon>Euteleostomi</taxon>
        <taxon>Mammalia</taxon>
        <taxon>Eutheria</taxon>
        <taxon>Euarchontoglires</taxon>
        <taxon>Glires</taxon>
        <taxon>Rodentia</taxon>
        <taxon>Myomorpha</taxon>
        <taxon>Muroidea</taxon>
        <taxon>Muridae</taxon>
        <taxon>Murinae</taxon>
        <taxon>Mus</taxon>
        <taxon>Mus</taxon>
    </lineage>
</organism>